<feature type="chain" id="PRO_1000018363" description="Tryptophan synthase beta chain">
    <location>
        <begin position="1"/>
        <end position="398"/>
    </location>
</feature>
<feature type="modified residue" description="N6-(pyridoxal phosphate)lysine" evidence="1">
    <location>
        <position position="92"/>
    </location>
</feature>
<accession>Q2Y7R4</accession>
<gene>
    <name evidence="1" type="primary">trpB</name>
    <name type="ordered locus">Nmul_A1912</name>
</gene>
<dbReference type="EC" id="4.2.1.20" evidence="1"/>
<dbReference type="EMBL" id="CP000103">
    <property type="protein sequence ID" value="ABB75207.1"/>
    <property type="molecule type" value="Genomic_DNA"/>
</dbReference>
<dbReference type="RefSeq" id="WP_011381227.1">
    <property type="nucleotide sequence ID" value="NC_007614.1"/>
</dbReference>
<dbReference type="SMR" id="Q2Y7R4"/>
<dbReference type="STRING" id="323848.Nmul_A1912"/>
<dbReference type="KEGG" id="nmu:Nmul_A1912"/>
<dbReference type="eggNOG" id="COG0133">
    <property type="taxonomic scope" value="Bacteria"/>
</dbReference>
<dbReference type="HOGENOM" id="CLU_016734_3_1_4"/>
<dbReference type="OrthoDB" id="9766131at2"/>
<dbReference type="UniPathway" id="UPA00035">
    <property type="reaction ID" value="UER00044"/>
</dbReference>
<dbReference type="Proteomes" id="UP000002718">
    <property type="component" value="Chromosome"/>
</dbReference>
<dbReference type="GO" id="GO:0005737">
    <property type="term" value="C:cytoplasm"/>
    <property type="evidence" value="ECO:0007669"/>
    <property type="project" value="TreeGrafter"/>
</dbReference>
<dbReference type="GO" id="GO:0004834">
    <property type="term" value="F:tryptophan synthase activity"/>
    <property type="evidence" value="ECO:0007669"/>
    <property type="project" value="UniProtKB-UniRule"/>
</dbReference>
<dbReference type="CDD" id="cd06446">
    <property type="entry name" value="Trp-synth_B"/>
    <property type="match status" value="1"/>
</dbReference>
<dbReference type="FunFam" id="3.40.50.1100:FF:000001">
    <property type="entry name" value="Tryptophan synthase beta chain"/>
    <property type="match status" value="1"/>
</dbReference>
<dbReference type="FunFam" id="3.40.50.1100:FF:000004">
    <property type="entry name" value="Tryptophan synthase beta chain"/>
    <property type="match status" value="1"/>
</dbReference>
<dbReference type="Gene3D" id="3.40.50.1100">
    <property type="match status" value="2"/>
</dbReference>
<dbReference type="HAMAP" id="MF_00133">
    <property type="entry name" value="Trp_synth_beta"/>
    <property type="match status" value="1"/>
</dbReference>
<dbReference type="InterPro" id="IPR006653">
    <property type="entry name" value="Trp_synth_b_CS"/>
</dbReference>
<dbReference type="InterPro" id="IPR006654">
    <property type="entry name" value="Trp_synth_beta"/>
</dbReference>
<dbReference type="InterPro" id="IPR023026">
    <property type="entry name" value="Trp_synth_beta/beta-like"/>
</dbReference>
<dbReference type="InterPro" id="IPR001926">
    <property type="entry name" value="TrpB-like_PALP"/>
</dbReference>
<dbReference type="InterPro" id="IPR036052">
    <property type="entry name" value="TrpB-like_PALP_sf"/>
</dbReference>
<dbReference type="NCBIfam" id="TIGR00263">
    <property type="entry name" value="trpB"/>
    <property type="match status" value="1"/>
</dbReference>
<dbReference type="PANTHER" id="PTHR48077:SF3">
    <property type="entry name" value="TRYPTOPHAN SYNTHASE"/>
    <property type="match status" value="1"/>
</dbReference>
<dbReference type="PANTHER" id="PTHR48077">
    <property type="entry name" value="TRYPTOPHAN SYNTHASE-RELATED"/>
    <property type="match status" value="1"/>
</dbReference>
<dbReference type="Pfam" id="PF00291">
    <property type="entry name" value="PALP"/>
    <property type="match status" value="1"/>
</dbReference>
<dbReference type="PIRSF" id="PIRSF001413">
    <property type="entry name" value="Trp_syn_beta"/>
    <property type="match status" value="1"/>
</dbReference>
<dbReference type="SUPFAM" id="SSF53686">
    <property type="entry name" value="Tryptophan synthase beta subunit-like PLP-dependent enzymes"/>
    <property type="match status" value="1"/>
</dbReference>
<dbReference type="PROSITE" id="PS00168">
    <property type="entry name" value="TRP_SYNTHASE_BETA"/>
    <property type="match status" value="1"/>
</dbReference>
<protein>
    <recommendedName>
        <fullName evidence="1">Tryptophan synthase beta chain</fullName>
        <ecNumber evidence="1">4.2.1.20</ecNumber>
    </recommendedName>
</protein>
<comment type="function">
    <text evidence="1">The beta subunit is responsible for the synthesis of L-tryptophan from indole and L-serine.</text>
</comment>
<comment type="catalytic activity">
    <reaction evidence="1">
        <text>(1S,2R)-1-C-(indol-3-yl)glycerol 3-phosphate + L-serine = D-glyceraldehyde 3-phosphate + L-tryptophan + H2O</text>
        <dbReference type="Rhea" id="RHEA:10532"/>
        <dbReference type="ChEBI" id="CHEBI:15377"/>
        <dbReference type="ChEBI" id="CHEBI:33384"/>
        <dbReference type="ChEBI" id="CHEBI:57912"/>
        <dbReference type="ChEBI" id="CHEBI:58866"/>
        <dbReference type="ChEBI" id="CHEBI:59776"/>
        <dbReference type="EC" id="4.2.1.20"/>
    </reaction>
</comment>
<comment type="cofactor">
    <cofactor evidence="1">
        <name>pyridoxal 5'-phosphate</name>
        <dbReference type="ChEBI" id="CHEBI:597326"/>
    </cofactor>
</comment>
<comment type="pathway">
    <text evidence="1">Amino-acid biosynthesis; L-tryptophan biosynthesis; L-tryptophan from chorismate: step 5/5.</text>
</comment>
<comment type="subunit">
    <text evidence="1">Tetramer of two alpha and two beta chains.</text>
</comment>
<comment type="similarity">
    <text evidence="1">Belongs to the TrpB family.</text>
</comment>
<name>TRPB_NITMU</name>
<evidence type="ECO:0000255" key="1">
    <source>
        <dbReference type="HAMAP-Rule" id="MF_00133"/>
    </source>
</evidence>
<sequence length="398" mass="43419">MKVYDLPDSHGHFGPYGGIFVAETLISALEDLRIQYERYRSDADFQAEFAHELKHYVGRPTPIYHAKRWSAQLGGAQILLKREDLNHTGAHKINNAMGQALLARRMGKSRVIAETGAGQHGVATATVAARYGMECVIYMGSVDVERQAANVYRMKLLGAEVIPVESGSRTLKDALNEAMRDWVTNVADTFYIIGTVAGPHPYPMMVRDFQAIIGREAITQMQEDYGRQPDALIACVGGGSNAIGLFYPYLDSSIRMIGVEAAGHGVETDQHAATLTKGRPGVLHGNRTYLIQDENGQIVETHSISAGLDYPGVGPEHAWLKDSGRAEYFGITDEQALEAFHALCHYEGIIPALESSHALAYAARLAPALTSDKLLLVNLSGRGDKDMPTVARASHITF</sequence>
<organism>
    <name type="scientific">Nitrosospira multiformis (strain ATCC 25196 / NCIMB 11849 / C 71)</name>
    <dbReference type="NCBI Taxonomy" id="323848"/>
    <lineage>
        <taxon>Bacteria</taxon>
        <taxon>Pseudomonadati</taxon>
        <taxon>Pseudomonadota</taxon>
        <taxon>Betaproteobacteria</taxon>
        <taxon>Nitrosomonadales</taxon>
        <taxon>Nitrosomonadaceae</taxon>
        <taxon>Nitrosospira</taxon>
    </lineage>
</organism>
<keyword id="KW-0028">Amino-acid biosynthesis</keyword>
<keyword id="KW-0057">Aromatic amino acid biosynthesis</keyword>
<keyword id="KW-0456">Lyase</keyword>
<keyword id="KW-0663">Pyridoxal phosphate</keyword>
<keyword id="KW-1185">Reference proteome</keyword>
<keyword id="KW-0822">Tryptophan biosynthesis</keyword>
<reference key="1">
    <citation type="submission" date="2005-08" db="EMBL/GenBank/DDBJ databases">
        <title>Complete sequence of chromosome 1 of Nitrosospira multiformis ATCC 25196.</title>
        <authorList>
            <person name="Copeland A."/>
            <person name="Lucas S."/>
            <person name="Lapidus A."/>
            <person name="Barry K."/>
            <person name="Detter J.C."/>
            <person name="Glavina T."/>
            <person name="Hammon N."/>
            <person name="Israni S."/>
            <person name="Pitluck S."/>
            <person name="Chain P."/>
            <person name="Malfatti S."/>
            <person name="Shin M."/>
            <person name="Vergez L."/>
            <person name="Schmutz J."/>
            <person name="Larimer F."/>
            <person name="Land M."/>
            <person name="Hauser L."/>
            <person name="Kyrpides N."/>
            <person name="Lykidis A."/>
            <person name="Richardson P."/>
        </authorList>
    </citation>
    <scope>NUCLEOTIDE SEQUENCE [LARGE SCALE GENOMIC DNA]</scope>
    <source>
        <strain>ATCC 25196 / NCIMB 11849 / C 71</strain>
    </source>
</reference>
<proteinExistence type="inferred from homology"/>